<name>RL10E_THEKO</name>
<keyword id="KW-0002">3D-structure</keyword>
<keyword id="KW-1185">Reference proteome</keyword>
<keyword id="KW-0687">Ribonucleoprotein</keyword>
<keyword id="KW-0689">Ribosomal protein</keyword>
<dbReference type="EMBL" id="AP006878">
    <property type="protein sequence ID" value="BAD85735.1"/>
    <property type="molecule type" value="Genomic_DNA"/>
</dbReference>
<dbReference type="RefSeq" id="WP_011250497.1">
    <property type="nucleotide sequence ID" value="NC_006624.1"/>
</dbReference>
<dbReference type="PDB" id="6SKF">
    <property type="method" value="EM"/>
    <property type="resolution" value="2.95 A"/>
    <property type="chains" value="BJ=1-182"/>
</dbReference>
<dbReference type="PDB" id="6SKG">
    <property type="method" value="EM"/>
    <property type="resolution" value="2.65 A"/>
    <property type="chains" value="BJ=1-182"/>
</dbReference>
<dbReference type="PDB" id="6TH6">
    <property type="method" value="EM"/>
    <property type="resolution" value="2.55 A"/>
    <property type="chains" value="BJ=1-182"/>
</dbReference>
<dbReference type="PDBsum" id="6SKF"/>
<dbReference type="PDBsum" id="6SKG"/>
<dbReference type="PDBsum" id="6TH6"/>
<dbReference type="EMDB" id="EMD-10223"/>
<dbReference type="EMDB" id="EMD-10224"/>
<dbReference type="EMDB" id="EMD-10503"/>
<dbReference type="SMR" id="Q5JDI6"/>
<dbReference type="FunCoup" id="Q5JDI6">
    <property type="interactions" value="134"/>
</dbReference>
<dbReference type="STRING" id="69014.TK1546"/>
<dbReference type="EnsemblBacteria" id="BAD85735">
    <property type="protein sequence ID" value="BAD85735"/>
    <property type="gene ID" value="TK1546"/>
</dbReference>
<dbReference type="GeneID" id="78448074"/>
<dbReference type="KEGG" id="tko:TK1546"/>
<dbReference type="PATRIC" id="fig|69014.16.peg.1506"/>
<dbReference type="eggNOG" id="arCOG04113">
    <property type="taxonomic scope" value="Archaea"/>
</dbReference>
<dbReference type="HOGENOM" id="CLU_084051_0_2_2"/>
<dbReference type="InParanoid" id="Q5JDI6"/>
<dbReference type="OrthoDB" id="30538at2157"/>
<dbReference type="PhylomeDB" id="Q5JDI6"/>
<dbReference type="Proteomes" id="UP000000536">
    <property type="component" value="Chromosome"/>
</dbReference>
<dbReference type="GO" id="GO:0022625">
    <property type="term" value="C:cytosolic large ribosomal subunit"/>
    <property type="evidence" value="ECO:0000318"/>
    <property type="project" value="GO_Central"/>
</dbReference>
<dbReference type="GO" id="GO:0003735">
    <property type="term" value="F:structural constituent of ribosome"/>
    <property type="evidence" value="ECO:0000318"/>
    <property type="project" value="GO_Central"/>
</dbReference>
<dbReference type="GO" id="GO:0006412">
    <property type="term" value="P:translation"/>
    <property type="evidence" value="ECO:0000318"/>
    <property type="project" value="GO_Central"/>
</dbReference>
<dbReference type="CDD" id="cd01433">
    <property type="entry name" value="Ribosomal_L16_L10e"/>
    <property type="match status" value="1"/>
</dbReference>
<dbReference type="FunFam" id="3.90.1170.10:FF:000008">
    <property type="entry name" value="50S ribosomal protein L10e"/>
    <property type="match status" value="1"/>
</dbReference>
<dbReference type="Gene3D" id="3.90.1170.10">
    <property type="entry name" value="Ribosomal protein L10e/L16"/>
    <property type="match status" value="1"/>
</dbReference>
<dbReference type="HAMAP" id="MF_00448">
    <property type="entry name" value="Ribosomal_uL16_arch"/>
    <property type="match status" value="1"/>
</dbReference>
<dbReference type="InterPro" id="IPR047873">
    <property type="entry name" value="Ribosomal_uL16"/>
</dbReference>
<dbReference type="InterPro" id="IPR022981">
    <property type="entry name" value="Ribosomal_uL16_arc"/>
</dbReference>
<dbReference type="InterPro" id="IPR018255">
    <property type="entry name" value="Ribosomal_uL16_CS_euk_arc"/>
</dbReference>
<dbReference type="InterPro" id="IPR016180">
    <property type="entry name" value="Ribosomal_uL16_dom"/>
</dbReference>
<dbReference type="InterPro" id="IPR001197">
    <property type="entry name" value="Ribosomal_uL16_euk_arch"/>
</dbReference>
<dbReference type="InterPro" id="IPR036920">
    <property type="entry name" value="Ribosomal_uL16_sf"/>
</dbReference>
<dbReference type="NCBIfam" id="NF003237">
    <property type="entry name" value="PRK04199.1-2"/>
    <property type="match status" value="1"/>
</dbReference>
<dbReference type="NCBIfam" id="NF003239">
    <property type="entry name" value="PRK04199.1-4"/>
    <property type="match status" value="1"/>
</dbReference>
<dbReference type="PANTHER" id="PTHR11726">
    <property type="entry name" value="60S RIBOSOMAL PROTEIN L10"/>
    <property type="match status" value="1"/>
</dbReference>
<dbReference type="Pfam" id="PF00252">
    <property type="entry name" value="Ribosomal_L16"/>
    <property type="match status" value="1"/>
</dbReference>
<dbReference type="PIRSF" id="PIRSF005590">
    <property type="entry name" value="Ribosomal_L10"/>
    <property type="match status" value="1"/>
</dbReference>
<dbReference type="SUPFAM" id="SSF54686">
    <property type="entry name" value="Ribosomal protein L16p/L10e"/>
    <property type="match status" value="1"/>
</dbReference>
<dbReference type="PROSITE" id="PS01257">
    <property type="entry name" value="RIBOSOMAL_L10E"/>
    <property type="match status" value="1"/>
</dbReference>
<reference key="1">
    <citation type="journal article" date="2005" name="Genome Res.">
        <title>Complete genome sequence of the hyperthermophilic archaeon Thermococcus kodakaraensis KOD1 and comparison with Pyrococcus genomes.</title>
        <authorList>
            <person name="Fukui T."/>
            <person name="Atomi H."/>
            <person name="Kanai T."/>
            <person name="Matsumi R."/>
            <person name="Fujiwara S."/>
            <person name="Imanaka T."/>
        </authorList>
    </citation>
    <scope>NUCLEOTIDE SEQUENCE [LARGE SCALE GENOMIC DNA]</scope>
    <source>
        <strain>ATCC BAA-918 / JCM 12380 / KOD1</strain>
    </source>
</reference>
<reference evidence="4 5 6" key="2">
    <citation type="journal article" date="2020" name="Nature">
        <title>Dynamic RNA acetylation revealed by quantitative cross-evolutionary mapping.</title>
        <authorList>
            <person name="Sas-Chen A."/>
            <person name="Thomas J.M."/>
            <person name="Matzov D."/>
            <person name="Taoka M."/>
            <person name="Nance K.D."/>
            <person name="Nir R."/>
            <person name="Bryson K.M."/>
            <person name="Shachar R."/>
            <person name="Liman G.L.S."/>
            <person name="Burkhart B.W."/>
            <person name="Gamage S.T."/>
            <person name="Nobe Y."/>
            <person name="Briney C.A."/>
            <person name="Levy M.J."/>
            <person name="Fuchs R.T."/>
            <person name="Robb G.B."/>
            <person name="Hartmann J."/>
            <person name="Sharma S."/>
            <person name="Lin Q."/>
            <person name="Florens L."/>
            <person name="Washburn M.P."/>
            <person name="Isobe T."/>
            <person name="Santangelo T.J."/>
            <person name="Shalev-Benami M."/>
            <person name="Meier J.L."/>
            <person name="Schwartz S."/>
        </authorList>
    </citation>
    <scope>STRUCTURE BY ELECTRON MICROSCOPY (2.55 ANGSTROMS) IN 70S RIBOSOME</scope>
    <scope>SUBUNIT</scope>
    <source>
        <strain>ATCC BAA-918 / TS559</strain>
    </source>
</reference>
<protein>
    <recommendedName>
        <fullName evidence="1">Large ribosomal subunit protein uL16</fullName>
    </recommendedName>
    <alternativeName>
        <fullName evidence="3">50S ribosomal protein L10e</fullName>
    </alternativeName>
</protein>
<proteinExistence type="evidence at protein level"/>
<gene>
    <name evidence="1" type="primary">rpl10e</name>
    <name type="ordered locus">TK1546</name>
</gene>
<organism>
    <name type="scientific">Thermococcus kodakarensis (strain ATCC BAA-918 / JCM 12380 / KOD1)</name>
    <name type="common">Pyrococcus kodakaraensis (strain KOD1)</name>
    <dbReference type="NCBI Taxonomy" id="69014"/>
    <lineage>
        <taxon>Archaea</taxon>
        <taxon>Methanobacteriati</taxon>
        <taxon>Methanobacteriota</taxon>
        <taxon>Thermococci</taxon>
        <taxon>Thermococcales</taxon>
        <taxon>Thermococcaceae</taxon>
        <taxon>Thermococcus</taxon>
    </lineage>
</organism>
<comment type="subunit">
    <text evidence="2">Part of the 50S ribosomal subunit.</text>
</comment>
<comment type="similarity">
    <text evidence="1">Belongs to the universal ribosomal protein uL16 family.</text>
</comment>
<feature type="chain" id="PRO_0000147146" description="Large ribosomal subunit protein uL16">
    <location>
        <begin position="1"/>
        <end position="182"/>
    </location>
</feature>
<sequence>MGLRPAKIDRDVDKPAYTRREYIRGAPGPKITIFDMGNLSAEFEYEVSLHAEQAMQIRQNALEAIRIQVNRYLQKNVGRSNYHFKIRVYPFQVLRENPMATGRKADRYGNGMRRPFGKPIGLAARVRKDQKILTVWVNGQHLKFALGAMHRAKMKLPYSAYYRIYDKEGNDVTTKVLSTMKL</sequence>
<evidence type="ECO:0000255" key="1">
    <source>
        <dbReference type="HAMAP-Rule" id="MF_00448"/>
    </source>
</evidence>
<evidence type="ECO:0000269" key="2">
    <source>
    </source>
</evidence>
<evidence type="ECO:0000305" key="3"/>
<evidence type="ECO:0007744" key="4">
    <source>
        <dbReference type="PDB" id="6SKF"/>
    </source>
</evidence>
<evidence type="ECO:0007744" key="5">
    <source>
        <dbReference type="PDB" id="6SKG"/>
    </source>
</evidence>
<evidence type="ECO:0007744" key="6">
    <source>
        <dbReference type="PDB" id="6TH6"/>
    </source>
</evidence>
<accession>Q5JDI6</accession>